<dbReference type="EMBL" id="BC135307">
    <property type="protein sequence ID" value="AAI35308.1"/>
    <property type="status" value="ALT_INIT"/>
    <property type="molecule type" value="mRNA"/>
</dbReference>
<dbReference type="RefSeq" id="NP_001263428.1">
    <property type="nucleotide sequence ID" value="NM_001276499.1"/>
</dbReference>
<dbReference type="SMR" id="A4IGZ4"/>
<dbReference type="FunCoup" id="A4IGZ4">
    <property type="interactions" value="1689"/>
</dbReference>
<dbReference type="PaxDb" id="8364-ENSXETP00000064076"/>
<dbReference type="GeneID" id="100038287"/>
<dbReference type="KEGG" id="xtr:100038287"/>
<dbReference type="AGR" id="Xenbase:XB-GENE-5856115"/>
<dbReference type="CTD" id="84316"/>
<dbReference type="Xenbase" id="XB-GENE-5856115">
    <property type="gene designation" value="naa38"/>
</dbReference>
<dbReference type="eggNOG" id="KOG3168">
    <property type="taxonomic scope" value="Eukaryota"/>
</dbReference>
<dbReference type="InParanoid" id="A4IGZ4"/>
<dbReference type="OMA" id="THEYRCP"/>
<dbReference type="OrthoDB" id="368909at2759"/>
<dbReference type="PhylomeDB" id="A4IGZ4"/>
<dbReference type="Proteomes" id="UP000008143">
    <property type="component" value="Chromosome 3"/>
</dbReference>
<dbReference type="GO" id="GO:0031417">
    <property type="term" value="C:NatC complex"/>
    <property type="evidence" value="ECO:0007669"/>
    <property type="project" value="InterPro"/>
</dbReference>
<dbReference type="GO" id="GO:0005634">
    <property type="term" value="C:nucleus"/>
    <property type="evidence" value="ECO:0007669"/>
    <property type="project" value="UniProtKB-SubCell"/>
</dbReference>
<dbReference type="GO" id="GO:0003723">
    <property type="term" value="F:RNA binding"/>
    <property type="evidence" value="ECO:0007669"/>
    <property type="project" value="InterPro"/>
</dbReference>
<dbReference type="CDD" id="cd06168">
    <property type="entry name" value="LSMD1"/>
    <property type="match status" value="1"/>
</dbReference>
<dbReference type="FunFam" id="2.30.30.100:FF:000028">
    <property type="entry name" value="N-alpha-acetyltransferase 38, NatC auxiliary subunit"/>
    <property type="match status" value="1"/>
</dbReference>
<dbReference type="Gene3D" id="2.30.30.100">
    <property type="match status" value="1"/>
</dbReference>
<dbReference type="InterPro" id="IPR010920">
    <property type="entry name" value="LSM_dom_sf"/>
</dbReference>
<dbReference type="InterPro" id="IPR034110">
    <property type="entry name" value="LSMD1_Sm"/>
</dbReference>
<dbReference type="InterPro" id="IPR047575">
    <property type="entry name" value="Sm"/>
</dbReference>
<dbReference type="InterPro" id="IPR001163">
    <property type="entry name" value="Sm_dom_euk/arc"/>
</dbReference>
<dbReference type="InterPro" id="IPR050914">
    <property type="entry name" value="snRNP_SmB/NAA38-like"/>
</dbReference>
<dbReference type="PANTHER" id="PTHR10701:SF5">
    <property type="entry name" value="N-ALPHA-ACETYLTRANSFERASE 38, NATC AUXILIARY SUBUNIT"/>
    <property type="match status" value="1"/>
</dbReference>
<dbReference type="PANTHER" id="PTHR10701">
    <property type="entry name" value="SMALL NUCLEAR RIBONUCLEOPROTEIN-ASSOCIATED PROTEIN B AND N"/>
    <property type="match status" value="1"/>
</dbReference>
<dbReference type="Pfam" id="PF01423">
    <property type="entry name" value="LSM"/>
    <property type="match status" value="1"/>
</dbReference>
<dbReference type="SMART" id="SM00651">
    <property type="entry name" value="Sm"/>
    <property type="match status" value="1"/>
</dbReference>
<dbReference type="SUPFAM" id="SSF50182">
    <property type="entry name" value="Sm-like ribonucleoproteins"/>
    <property type="match status" value="1"/>
</dbReference>
<dbReference type="PROSITE" id="PS52002">
    <property type="entry name" value="SM"/>
    <property type="match status" value="1"/>
</dbReference>
<comment type="function">
    <text evidence="1">Auxillary component of the N-terminal acetyltransferase C (NatC) complex which catalyzes acetylation of N-terminal methionine residues. N-terminal acetylation protects proteins from ubiquitination and degradation by the N-end rule pathway.</text>
</comment>
<comment type="subunit">
    <text evidence="1">Component of the N-terminal acetyltransferase C (NatC) complex.</text>
</comment>
<comment type="subcellular location">
    <subcellularLocation>
        <location evidence="1">Cytoplasm</location>
    </subcellularLocation>
    <subcellularLocation>
        <location evidence="1">Nucleus</location>
    </subcellularLocation>
</comment>
<comment type="similarity">
    <text evidence="4">Belongs to the snRNP Sm proteins family.</text>
</comment>
<comment type="sequence caution" evidence="4">
    <conflict type="erroneous initiation">
        <sequence resource="EMBL-CDS" id="AAI35308"/>
    </conflict>
</comment>
<sequence>MAAVLEENGCSRQSSPGAGDSDAEAGDTARHKLESLLNRNMRIEMTDGRSLIGCFLCTDRDCNVILGSAQEFLRPSDSFPVREPRVLGLAMVPGHHIVSIQVELESVTSPQYI</sequence>
<proteinExistence type="inferred from homology"/>
<name>NAA38_XENTR</name>
<feature type="chain" id="PRO_0000299160" description="N-alpha-acetyltransferase 38, NatC auxiliary subunit">
    <location>
        <begin position="1"/>
        <end position="113"/>
    </location>
</feature>
<feature type="domain" description="Sm" evidence="2">
    <location>
        <begin position="28"/>
        <end position="106"/>
    </location>
</feature>
<feature type="region of interest" description="Disordered" evidence="3">
    <location>
        <begin position="1"/>
        <end position="29"/>
    </location>
</feature>
<accession>A4IGZ4</accession>
<organism>
    <name type="scientific">Xenopus tropicalis</name>
    <name type="common">Western clawed frog</name>
    <name type="synonym">Silurana tropicalis</name>
    <dbReference type="NCBI Taxonomy" id="8364"/>
    <lineage>
        <taxon>Eukaryota</taxon>
        <taxon>Metazoa</taxon>
        <taxon>Chordata</taxon>
        <taxon>Craniata</taxon>
        <taxon>Vertebrata</taxon>
        <taxon>Euteleostomi</taxon>
        <taxon>Amphibia</taxon>
        <taxon>Batrachia</taxon>
        <taxon>Anura</taxon>
        <taxon>Pipoidea</taxon>
        <taxon>Pipidae</taxon>
        <taxon>Xenopodinae</taxon>
        <taxon>Xenopus</taxon>
        <taxon>Silurana</taxon>
    </lineage>
</organism>
<evidence type="ECO:0000250" key="1">
    <source>
        <dbReference type="UniProtKB" id="Q9BRA0"/>
    </source>
</evidence>
<evidence type="ECO:0000255" key="2">
    <source>
        <dbReference type="PROSITE-ProRule" id="PRU01346"/>
    </source>
</evidence>
<evidence type="ECO:0000256" key="3">
    <source>
        <dbReference type="SAM" id="MobiDB-lite"/>
    </source>
</evidence>
<evidence type="ECO:0000305" key="4"/>
<keyword id="KW-0963">Cytoplasm</keyword>
<keyword id="KW-0539">Nucleus</keyword>
<keyword id="KW-1185">Reference proteome</keyword>
<reference key="1">
    <citation type="submission" date="2007-03" db="EMBL/GenBank/DDBJ databases">
        <authorList>
            <consortium name="NIH - Xenopus Gene Collection (XGC) project"/>
        </authorList>
    </citation>
    <scope>NUCLEOTIDE SEQUENCE [LARGE SCALE MRNA]</scope>
    <source>
        <tissue>Embryo</tissue>
    </source>
</reference>
<protein>
    <recommendedName>
        <fullName>N-alpha-acetyltransferase 38, NatC auxiliary subunit</fullName>
    </recommendedName>
    <alternativeName>
        <fullName>LSM domain-containing protein 1</fullName>
    </alternativeName>
</protein>
<gene>
    <name type="primary">naa38</name>
    <name type="synonym">lsmd1</name>
</gene>